<name>ARP5_ORYSI</name>
<evidence type="ECO:0000250" key="1">
    <source>
        <dbReference type="UniProtKB" id="Q940Z2"/>
    </source>
</evidence>
<evidence type="ECO:0000255" key="2"/>
<evidence type="ECO:0000256" key="3">
    <source>
        <dbReference type="SAM" id="MobiDB-lite"/>
    </source>
</evidence>
<evidence type="ECO:0000305" key="4"/>
<keyword id="KW-0175">Coiled coil</keyword>
<keyword id="KW-0539">Nucleus</keyword>
<keyword id="KW-1185">Reference proteome</keyword>
<reference key="1">
    <citation type="journal article" date="2005" name="PLoS Biol.">
        <title>The genomes of Oryza sativa: a history of duplications.</title>
        <authorList>
            <person name="Yu J."/>
            <person name="Wang J."/>
            <person name="Lin W."/>
            <person name="Li S."/>
            <person name="Li H."/>
            <person name="Zhou J."/>
            <person name="Ni P."/>
            <person name="Dong W."/>
            <person name="Hu S."/>
            <person name="Zeng C."/>
            <person name="Zhang J."/>
            <person name="Zhang Y."/>
            <person name="Li R."/>
            <person name="Xu Z."/>
            <person name="Li S."/>
            <person name="Li X."/>
            <person name="Zheng H."/>
            <person name="Cong L."/>
            <person name="Lin L."/>
            <person name="Yin J."/>
            <person name="Geng J."/>
            <person name="Li G."/>
            <person name="Shi J."/>
            <person name="Liu J."/>
            <person name="Lv H."/>
            <person name="Li J."/>
            <person name="Wang J."/>
            <person name="Deng Y."/>
            <person name="Ran L."/>
            <person name="Shi X."/>
            <person name="Wang X."/>
            <person name="Wu Q."/>
            <person name="Li C."/>
            <person name="Ren X."/>
            <person name="Wang J."/>
            <person name="Wang X."/>
            <person name="Li D."/>
            <person name="Liu D."/>
            <person name="Zhang X."/>
            <person name="Ji Z."/>
            <person name="Zhao W."/>
            <person name="Sun Y."/>
            <person name="Zhang Z."/>
            <person name="Bao J."/>
            <person name="Han Y."/>
            <person name="Dong L."/>
            <person name="Ji J."/>
            <person name="Chen P."/>
            <person name="Wu S."/>
            <person name="Liu J."/>
            <person name="Xiao Y."/>
            <person name="Bu D."/>
            <person name="Tan J."/>
            <person name="Yang L."/>
            <person name="Ye C."/>
            <person name="Zhang J."/>
            <person name="Xu J."/>
            <person name="Zhou Y."/>
            <person name="Yu Y."/>
            <person name="Zhang B."/>
            <person name="Zhuang S."/>
            <person name="Wei H."/>
            <person name="Liu B."/>
            <person name="Lei M."/>
            <person name="Yu H."/>
            <person name="Li Y."/>
            <person name="Xu H."/>
            <person name="Wei S."/>
            <person name="He X."/>
            <person name="Fang L."/>
            <person name="Zhang Z."/>
            <person name="Zhang Y."/>
            <person name="Huang X."/>
            <person name="Su Z."/>
            <person name="Tong W."/>
            <person name="Li J."/>
            <person name="Tong Z."/>
            <person name="Li S."/>
            <person name="Ye J."/>
            <person name="Wang L."/>
            <person name="Fang L."/>
            <person name="Lei T."/>
            <person name="Chen C.-S."/>
            <person name="Chen H.-C."/>
            <person name="Xu Z."/>
            <person name="Li H."/>
            <person name="Huang H."/>
            <person name="Zhang F."/>
            <person name="Xu H."/>
            <person name="Li N."/>
            <person name="Zhao C."/>
            <person name="Li S."/>
            <person name="Dong L."/>
            <person name="Huang Y."/>
            <person name="Li L."/>
            <person name="Xi Y."/>
            <person name="Qi Q."/>
            <person name="Li W."/>
            <person name="Zhang B."/>
            <person name="Hu W."/>
            <person name="Zhang Y."/>
            <person name="Tian X."/>
            <person name="Jiao Y."/>
            <person name="Liang X."/>
            <person name="Jin J."/>
            <person name="Gao L."/>
            <person name="Zheng W."/>
            <person name="Hao B."/>
            <person name="Liu S.-M."/>
            <person name="Wang W."/>
            <person name="Yuan L."/>
            <person name="Cao M."/>
            <person name="McDermott J."/>
            <person name="Samudrala R."/>
            <person name="Wang J."/>
            <person name="Wong G.K.-S."/>
            <person name="Yang H."/>
        </authorList>
    </citation>
    <scope>NUCLEOTIDE SEQUENCE [LARGE SCALE GENOMIC DNA]</scope>
    <source>
        <strain>cv. 93-11</strain>
    </source>
</reference>
<reference key="2">
    <citation type="journal article" date="2004" name="Trends Plant Sci.">
        <title>Plant actin-related proteins.</title>
        <authorList>
            <person name="Kandasamy M.K."/>
            <person name="Deal R.B."/>
            <person name="McKinney E.C."/>
            <person name="Meagher R.B."/>
        </authorList>
    </citation>
    <scope>REVIEW</scope>
    <scope>GENE FAMILY</scope>
    <scope>NOMENCLATURE</scope>
</reference>
<feature type="chain" id="PRO_0000320534" description="Actin-related protein 5">
    <location>
        <begin position="1"/>
        <end position="575"/>
    </location>
</feature>
<feature type="region of interest" description="Disordered" evidence="3">
    <location>
        <begin position="267"/>
        <end position="298"/>
    </location>
</feature>
<feature type="region of interest" description="Disordered" evidence="3">
    <location>
        <begin position="313"/>
        <end position="343"/>
    </location>
</feature>
<feature type="coiled-coil region" evidence="2">
    <location>
        <begin position="100"/>
        <end position="196"/>
    </location>
</feature>
<feature type="coiled-coil region" evidence="2">
    <location>
        <begin position="273"/>
        <end position="325"/>
    </location>
</feature>
<feature type="compositionally biased region" description="Basic and acidic residues" evidence="3">
    <location>
        <begin position="270"/>
        <end position="298"/>
    </location>
</feature>
<gene>
    <name type="primary">ARP5</name>
    <name type="ORF">OsI_000348</name>
</gene>
<sequence length="575" mass="65287">MSELLFETYGVPSIGNDTYLFVPLLSIVHGSFEVRIVDAKDVSSYFLKGEPVLGACCRTNVGGFHITDFLRQLLSLKYPYHSASITWEKAEELKKEHCYVALDYMSELQIFKNNKEEAEEKTRYWQLPWVPPPVEEPPSEEELARKAALKEKAGQRLRDMAAAKRSQKIAELEKQLSYLEELMEQLDGAEEEEATAILGRSGYLSQQEIKSAILKATQSLRKAKGESNGNEEKADASGVDKYPLVSVPDETLTPEQLKEKKKQILLKTTTEGRMRAKQRRAEEEALREKQEEERRLENPELYLEELRARYSELSDRVDQRKRQKLNGGKTNGNHNSSGGVGRGERLNAAQKERMRLLTSAAFDRGKGEDTFGTRDEDWLVYKKMSKDNDDDDDGNDDDESELARIASKIQDMDPTFVNKAEAVQQTPEPPKVRTLTAEDYRISIGIERFRCPEILFQPGMIGIDQAGIDEMVSISLRRLMEDEAVKERLCQSILVTGGCSLIPGMIPRLESGIRQFRPYLSPLKLVRAADPLIDAWRGAAAFAASSKFGRHTFSLADYREHGENLFHRYNIVYSL</sequence>
<proteinExistence type="evidence at transcript level"/>
<dbReference type="EMBL" id="CM000126">
    <property type="status" value="NOT_ANNOTATED_CDS"/>
    <property type="molecule type" value="Genomic_DNA"/>
</dbReference>
<dbReference type="SMR" id="A2WKK5"/>
<dbReference type="STRING" id="39946.A2WKK5"/>
<dbReference type="Proteomes" id="UP000007015">
    <property type="component" value="Chromosome 1"/>
</dbReference>
<dbReference type="GO" id="GO:0005634">
    <property type="term" value="C:nucleus"/>
    <property type="evidence" value="ECO:0007669"/>
    <property type="project" value="UniProtKB-SubCell"/>
</dbReference>
<dbReference type="FunFam" id="3.90.640.10:FF:000034">
    <property type="entry name" value="Actin-related protein 5"/>
    <property type="match status" value="1"/>
</dbReference>
<dbReference type="FunFam" id="3.90.640.10:FF:000060">
    <property type="entry name" value="Actin-related protein 5"/>
    <property type="match status" value="1"/>
</dbReference>
<dbReference type="FunFam" id="3.30.420.40:FF:000048">
    <property type="entry name" value="ARP5 actin-related protein 5 homolog"/>
    <property type="match status" value="1"/>
</dbReference>
<dbReference type="FunFam" id="3.30.420.40:FF:000058">
    <property type="entry name" value="Putative actin-related protein 5"/>
    <property type="match status" value="1"/>
</dbReference>
<dbReference type="Gene3D" id="3.30.420.40">
    <property type="match status" value="1"/>
</dbReference>
<dbReference type="Gene3D" id="3.90.640.10">
    <property type="entry name" value="Actin, Chain A, domain 4"/>
    <property type="match status" value="1"/>
</dbReference>
<dbReference type="InterPro" id="IPR004000">
    <property type="entry name" value="Actin"/>
</dbReference>
<dbReference type="InterPro" id="IPR043129">
    <property type="entry name" value="ATPase_NBD"/>
</dbReference>
<dbReference type="PANTHER" id="PTHR11937">
    <property type="entry name" value="ACTIN"/>
    <property type="match status" value="1"/>
</dbReference>
<dbReference type="Pfam" id="PF00022">
    <property type="entry name" value="Actin"/>
    <property type="match status" value="1"/>
</dbReference>
<dbReference type="SMART" id="SM00268">
    <property type="entry name" value="ACTIN"/>
    <property type="match status" value="1"/>
</dbReference>
<dbReference type="SUPFAM" id="SSF53067">
    <property type="entry name" value="Actin-like ATPase domain"/>
    <property type="match status" value="1"/>
</dbReference>
<comment type="subcellular location">
    <subcellularLocation>
        <location evidence="1">Nucleus</location>
    </subcellularLocation>
</comment>
<comment type="similarity">
    <text evidence="4">Belongs to the actin family. ARP5 subfamily.</text>
</comment>
<accession>A2WKK5</accession>
<organism>
    <name type="scientific">Oryza sativa subsp. indica</name>
    <name type="common">Rice</name>
    <dbReference type="NCBI Taxonomy" id="39946"/>
    <lineage>
        <taxon>Eukaryota</taxon>
        <taxon>Viridiplantae</taxon>
        <taxon>Streptophyta</taxon>
        <taxon>Embryophyta</taxon>
        <taxon>Tracheophyta</taxon>
        <taxon>Spermatophyta</taxon>
        <taxon>Magnoliopsida</taxon>
        <taxon>Liliopsida</taxon>
        <taxon>Poales</taxon>
        <taxon>Poaceae</taxon>
        <taxon>BOP clade</taxon>
        <taxon>Oryzoideae</taxon>
        <taxon>Oryzeae</taxon>
        <taxon>Oryzinae</taxon>
        <taxon>Oryza</taxon>
        <taxon>Oryza sativa</taxon>
    </lineage>
</organism>
<protein>
    <recommendedName>
        <fullName>Actin-related protein 5</fullName>
    </recommendedName>
</protein>